<dbReference type="EMBL" id="CP001120">
    <property type="protein sequence ID" value="ACF68287.1"/>
    <property type="molecule type" value="Genomic_DNA"/>
</dbReference>
<dbReference type="RefSeq" id="WP_000730068.1">
    <property type="nucleotide sequence ID" value="NC_011083.1"/>
</dbReference>
<dbReference type="SMR" id="B4TBA7"/>
<dbReference type="KEGG" id="seh:SeHA_C0828"/>
<dbReference type="HOGENOM" id="CLU_018614_3_0_6"/>
<dbReference type="Proteomes" id="UP000001866">
    <property type="component" value="Chromosome"/>
</dbReference>
<dbReference type="GO" id="GO:0005886">
    <property type="term" value="C:plasma membrane"/>
    <property type="evidence" value="ECO:0007669"/>
    <property type="project" value="UniProtKB-SubCell"/>
</dbReference>
<dbReference type="GO" id="GO:0008556">
    <property type="term" value="F:P-type potassium transmembrane transporter activity"/>
    <property type="evidence" value="ECO:0007669"/>
    <property type="project" value="InterPro"/>
</dbReference>
<dbReference type="GO" id="GO:0030955">
    <property type="term" value="F:potassium ion binding"/>
    <property type="evidence" value="ECO:0007669"/>
    <property type="project" value="UniProtKB-UniRule"/>
</dbReference>
<dbReference type="HAMAP" id="MF_00275">
    <property type="entry name" value="KdpA"/>
    <property type="match status" value="1"/>
</dbReference>
<dbReference type="InterPro" id="IPR004623">
    <property type="entry name" value="KdpA"/>
</dbReference>
<dbReference type="NCBIfam" id="TIGR00680">
    <property type="entry name" value="kdpA"/>
    <property type="match status" value="1"/>
</dbReference>
<dbReference type="PANTHER" id="PTHR30607">
    <property type="entry name" value="POTASSIUM-TRANSPORTING ATPASE A CHAIN"/>
    <property type="match status" value="1"/>
</dbReference>
<dbReference type="PANTHER" id="PTHR30607:SF2">
    <property type="entry name" value="POTASSIUM-TRANSPORTING ATPASE POTASSIUM-BINDING SUBUNIT"/>
    <property type="match status" value="1"/>
</dbReference>
<dbReference type="Pfam" id="PF03814">
    <property type="entry name" value="KdpA"/>
    <property type="match status" value="1"/>
</dbReference>
<dbReference type="PIRSF" id="PIRSF001294">
    <property type="entry name" value="K_ATPaseA"/>
    <property type="match status" value="1"/>
</dbReference>
<feature type="chain" id="PRO_1000114702" description="Potassium-transporting ATPase potassium-binding subunit">
    <location>
        <begin position="1"/>
        <end position="559"/>
    </location>
</feature>
<feature type="transmembrane region" description="Helical" evidence="1">
    <location>
        <begin position="5"/>
        <end position="25"/>
    </location>
</feature>
<feature type="transmembrane region" description="Helical" evidence="1">
    <location>
        <begin position="27"/>
        <end position="47"/>
    </location>
</feature>
<feature type="transmembrane region" description="Helical" evidence="1">
    <location>
        <begin position="63"/>
        <end position="83"/>
    </location>
</feature>
<feature type="transmembrane region" description="Helical" evidence="1">
    <location>
        <begin position="132"/>
        <end position="152"/>
    </location>
</feature>
<feature type="transmembrane region" description="Helical" evidence="1">
    <location>
        <begin position="170"/>
        <end position="190"/>
    </location>
</feature>
<feature type="transmembrane region" description="Helical" evidence="1">
    <location>
        <begin position="253"/>
        <end position="273"/>
    </location>
</feature>
<feature type="transmembrane region" description="Helical" evidence="1">
    <location>
        <begin position="283"/>
        <end position="303"/>
    </location>
</feature>
<feature type="transmembrane region" description="Helical" evidence="1">
    <location>
        <begin position="327"/>
        <end position="347"/>
    </location>
</feature>
<feature type="transmembrane region" description="Helical" evidence="1">
    <location>
        <begin position="356"/>
        <end position="376"/>
    </location>
</feature>
<feature type="transmembrane region" description="Helical" evidence="1">
    <location>
        <begin position="379"/>
        <end position="399"/>
    </location>
</feature>
<feature type="transmembrane region" description="Helical" evidence="1">
    <location>
        <begin position="416"/>
        <end position="436"/>
    </location>
</feature>
<feature type="transmembrane region" description="Helical" evidence="1">
    <location>
        <begin position="484"/>
        <end position="504"/>
    </location>
</feature>
<feature type="transmembrane region" description="Helical" evidence="1">
    <location>
        <begin position="524"/>
        <end position="544"/>
    </location>
</feature>
<proteinExistence type="inferred from homology"/>
<evidence type="ECO:0000255" key="1">
    <source>
        <dbReference type="HAMAP-Rule" id="MF_00275"/>
    </source>
</evidence>
<sequence>MAAQGFLLIASFLLILLVLAKPLGSGLARLIAAVPLPGVAGIERILWRTLGITDHEMNWRQYLLALLTLNLLGLGILFCLLFWQEWLPLNPQRLPGLSWDLALNTAVSFVTNTNWQAYSGESTLSYFSQMAGLTVQNFLSAATGIAVVFALIRAFTRQNVHTLGNAWQDLVRITLWILFPVALIIALFFIQQGVPQNLSAYQPITTLEGAKQLLPMGPVASQEAIKMLGTNGGGFFNANSSHPFENPTALTNLAQMLAIFLIPAALCFAFGEAAGDRRQGRALLWAMSFIFVVCVAVVMWAEVQGNPHLLAAGADSSVNMEGKETRFGVLASSLFAVVTTAASCGAVNAMHDSFTALGGMVPMWLMQIGEVVFGGVGSGLYGMLLFVLLAVFIAGLMIGRTPEYLGKKIDVREMKMTALAILVTPMLVLLGSALAMMTDAGRSAMLNPGPHGFSEVLYAVSSAANNNGSAFAGLSANSPFWNCLLAFCMFVGRFGVIIPVMAIAGSLVSKKVQPASQGTLATHGALFIGLLIGTVLLVGALTFIPALALGPVAEHFSLP</sequence>
<protein>
    <recommendedName>
        <fullName evidence="1">Potassium-transporting ATPase potassium-binding subunit</fullName>
    </recommendedName>
    <alternativeName>
        <fullName evidence="1">ATP phosphohydrolase [potassium-transporting] A chain</fullName>
    </alternativeName>
    <alternativeName>
        <fullName evidence="1">Potassium-binding and translocating subunit A</fullName>
    </alternativeName>
    <alternativeName>
        <fullName evidence="1">Potassium-translocating ATPase A chain</fullName>
    </alternativeName>
</protein>
<reference key="1">
    <citation type="journal article" date="2011" name="J. Bacteriol.">
        <title>Comparative genomics of 28 Salmonella enterica isolates: evidence for CRISPR-mediated adaptive sublineage evolution.</title>
        <authorList>
            <person name="Fricke W.F."/>
            <person name="Mammel M.K."/>
            <person name="McDermott P.F."/>
            <person name="Tartera C."/>
            <person name="White D.G."/>
            <person name="Leclerc J.E."/>
            <person name="Ravel J."/>
            <person name="Cebula T.A."/>
        </authorList>
    </citation>
    <scope>NUCLEOTIDE SEQUENCE [LARGE SCALE GENOMIC DNA]</scope>
    <source>
        <strain>SL476</strain>
    </source>
</reference>
<gene>
    <name evidence="1" type="primary">kdpA</name>
    <name type="ordered locus">SeHA_C0828</name>
</gene>
<comment type="function">
    <text evidence="1">Part of the high-affinity ATP-driven potassium transport (or Kdp) system, which catalyzes the hydrolysis of ATP coupled with the electrogenic transport of potassium into the cytoplasm. This subunit binds the periplasmic potassium ions and delivers the ions to the membrane domain of KdpB through an intramembrane tunnel.</text>
</comment>
<comment type="subunit">
    <text evidence="1">The system is composed of three essential subunits: KdpA, KdpB and KdpC.</text>
</comment>
<comment type="subcellular location">
    <subcellularLocation>
        <location evidence="1">Cell inner membrane</location>
        <topology evidence="1">Multi-pass membrane protein</topology>
    </subcellularLocation>
</comment>
<comment type="similarity">
    <text evidence="1">Belongs to the KdpA family.</text>
</comment>
<name>KDPA_SALHS</name>
<keyword id="KW-0997">Cell inner membrane</keyword>
<keyword id="KW-1003">Cell membrane</keyword>
<keyword id="KW-0406">Ion transport</keyword>
<keyword id="KW-0472">Membrane</keyword>
<keyword id="KW-0630">Potassium</keyword>
<keyword id="KW-0633">Potassium transport</keyword>
<keyword id="KW-0812">Transmembrane</keyword>
<keyword id="KW-1133">Transmembrane helix</keyword>
<keyword id="KW-0813">Transport</keyword>
<organism>
    <name type="scientific">Salmonella heidelberg (strain SL476)</name>
    <dbReference type="NCBI Taxonomy" id="454169"/>
    <lineage>
        <taxon>Bacteria</taxon>
        <taxon>Pseudomonadati</taxon>
        <taxon>Pseudomonadota</taxon>
        <taxon>Gammaproteobacteria</taxon>
        <taxon>Enterobacterales</taxon>
        <taxon>Enterobacteriaceae</taxon>
        <taxon>Salmonella</taxon>
    </lineage>
</organism>
<accession>B4TBA7</accession>